<reference key="1">
    <citation type="journal article" date="2011" name="J. Bacteriol.">
        <title>Comparative genomics of 28 Salmonella enterica isolates: evidence for CRISPR-mediated adaptive sublineage evolution.</title>
        <authorList>
            <person name="Fricke W.F."/>
            <person name="Mammel M.K."/>
            <person name="McDermott P.F."/>
            <person name="Tartera C."/>
            <person name="White D.G."/>
            <person name="Leclerc J.E."/>
            <person name="Ravel J."/>
            <person name="Cebula T.A."/>
        </authorList>
    </citation>
    <scope>NUCLEOTIDE SEQUENCE [LARGE SCALE GENOMIC DNA]</scope>
    <source>
        <strain>SL476</strain>
    </source>
</reference>
<protein>
    <recommendedName>
        <fullName evidence="1">Glutamate 5-kinase</fullName>
        <ecNumber evidence="1">2.7.2.11</ecNumber>
    </recommendedName>
    <alternativeName>
        <fullName evidence="1">Gamma-glutamyl kinase</fullName>
        <shortName evidence="1">GK</shortName>
    </alternativeName>
</protein>
<sequence>MSDSQTLVVKLGTSVLTGGSRRLNRAHIVELVRQCAQLHAAGHRIVIVTSGAIAAGREHLGYPELPATIASKQLLAAVGQSRLIQLWEQLFSIYGIHIGQMLLTRADMEDRERFLNARDTLRALLDNHIVPVINENDAVATAEIKVGDNDNLSALAAILAGADKLLLLTDQQGLFTADPRSNPQAELIKDVYGVDDALRSIAGDSVSGLGTGGMSTKLQAADVACRAGIDTIIASGSKPGVIGDVMEGISVGTRFHAQASPLENRKRWIFGAPPAGEITVDEGATAAMLERGSSLLPKGIKSVTGNFSRGEVIRICNLQGRDIAHGVSRYNSDALRRIAGHHSQQIDAILGYEYGPVAVHRDDMITR</sequence>
<feature type="chain" id="PRO_1000125259" description="Glutamate 5-kinase">
    <location>
        <begin position="1"/>
        <end position="367"/>
    </location>
</feature>
<feature type="domain" description="PUA" evidence="1">
    <location>
        <begin position="275"/>
        <end position="353"/>
    </location>
</feature>
<feature type="binding site" evidence="1">
    <location>
        <position position="10"/>
    </location>
    <ligand>
        <name>ATP</name>
        <dbReference type="ChEBI" id="CHEBI:30616"/>
    </ligand>
</feature>
<feature type="binding site" evidence="1">
    <location>
        <position position="50"/>
    </location>
    <ligand>
        <name>substrate</name>
    </ligand>
</feature>
<feature type="binding site" evidence="1">
    <location>
        <position position="137"/>
    </location>
    <ligand>
        <name>substrate</name>
    </ligand>
</feature>
<feature type="binding site" evidence="1">
    <location>
        <position position="149"/>
    </location>
    <ligand>
        <name>substrate</name>
    </ligand>
</feature>
<feature type="binding site" evidence="1">
    <location>
        <begin position="169"/>
        <end position="170"/>
    </location>
    <ligand>
        <name>ATP</name>
        <dbReference type="ChEBI" id="CHEBI:30616"/>
    </ligand>
</feature>
<feature type="binding site" evidence="1">
    <location>
        <begin position="211"/>
        <end position="217"/>
    </location>
    <ligand>
        <name>ATP</name>
        <dbReference type="ChEBI" id="CHEBI:30616"/>
    </ligand>
</feature>
<evidence type="ECO:0000255" key="1">
    <source>
        <dbReference type="HAMAP-Rule" id="MF_00456"/>
    </source>
</evidence>
<proteinExistence type="inferred from homology"/>
<gene>
    <name evidence="1" type="primary">proB</name>
    <name type="ordered locus">SeHA_C0363</name>
</gene>
<keyword id="KW-0028">Amino-acid biosynthesis</keyword>
<keyword id="KW-0067">ATP-binding</keyword>
<keyword id="KW-0963">Cytoplasm</keyword>
<keyword id="KW-0418">Kinase</keyword>
<keyword id="KW-0547">Nucleotide-binding</keyword>
<keyword id="KW-0641">Proline biosynthesis</keyword>
<keyword id="KW-0808">Transferase</keyword>
<organism>
    <name type="scientific">Salmonella heidelberg (strain SL476)</name>
    <dbReference type="NCBI Taxonomy" id="454169"/>
    <lineage>
        <taxon>Bacteria</taxon>
        <taxon>Pseudomonadati</taxon>
        <taxon>Pseudomonadota</taxon>
        <taxon>Gammaproteobacteria</taxon>
        <taxon>Enterobacterales</taxon>
        <taxon>Enterobacteriaceae</taxon>
        <taxon>Salmonella</taxon>
    </lineage>
</organism>
<comment type="function">
    <text evidence="1">Catalyzes the transfer of a phosphate group to glutamate to form L-glutamate 5-phosphate.</text>
</comment>
<comment type="catalytic activity">
    <reaction evidence="1">
        <text>L-glutamate + ATP = L-glutamyl 5-phosphate + ADP</text>
        <dbReference type="Rhea" id="RHEA:14877"/>
        <dbReference type="ChEBI" id="CHEBI:29985"/>
        <dbReference type="ChEBI" id="CHEBI:30616"/>
        <dbReference type="ChEBI" id="CHEBI:58274"/>
        <dbReference type="ChEBI" id="CHEBI:456216"/>
        <dbReference type="EC" id="2.7.2.11"/>
    </reaction>
</comment>
<comment type="pathway">
    <text evidence="1">Amino-acid biosynthesis; L-proline biosynthesis; L-glutamate 5-semialdehyde from L-glutamate: step 1/2.</text>
</comment>
<comment type="subcellular location">
    <subcellularLocation>
        <location evidence="1">Cytoplasm</location>
    </subcellularLocation>
</comment>
<comment type="similarity">
    <text evidence="1">Belongs to the glutamate 5-kinase family.</text>
</comment>
<name>PROB_SALHS</name>
<accession>B4T7Q5</accession>
<dbReference type="EC" id="2.7.2.11" evidence="1"/>
<dbReference type="EMBL" id="CP001120">
    <property type="protein sequence ID" value="ACF68760.1"/>
    <property type="molecule type" value="Genomic_DNA"/>
</dbReference>
<dbReference type="RefSeq" id="WP_001285275.1">
    <property type="nucleotide sequence ID" value="NC_011083.1"/>
</dbReference>
<dbReference type="SMR" id="B4T7Q5"/>
<dbReference type="KEGG" id="seh:SeHA_C0363"/>
<dbReference type="HOGENOM" id="CLU_025400_2_0_6"/>
<dbReference type="UniPathway" id="UPA00098">
    <property type="reaction ID" value="UER00359"/>
</dbReference>
<dbReference type="Proteomes" id="UP000001866">
    <property type="component" value="Chromosome"/>
</dbReference>
<dbReference type="GO" id="GO:0005829">
    <property type="term" value="C:cytosol"/>
    <property type="evidence" value="ECO:0007669"/>
    <property type="project" value="TreeGrafter"/>
</dbReference>
<dbReference type="GO" id="GO:0005524">
    <property type="term" value="F:ATP binding"/>
    <property type="evidence" value="ECO:0007669"/>
    <property type="project" value="UniProtKB-KW"/>
</dbReference>
<dbReference type="GO" id="GO:0004349">
    <property type="term" value="F:glutamate 5-kinase activity"/>
    <property type="evidence" value="ECO:0007669"/>
    <property type="project" value="UniProtKB-UniRule"/>
</dbReference>
<dbReference type="GO" id="GO:0003723">
    <property type="term" value="F:RNA binding"/>
    <property type="evidence" value="ECO:0007669"/>
    <property type="project" value="InterPro"/>
</dbReference>
<dbReference type="GO" id="GO:0055129">
    <property type="term" value="P:L-proline biosynthetic process"/>
    <property type="evidence" value="ECO:0007669"/>
    <property type="project" value="UniProtKB-UniRule"/>
</dbReference>
<dbReference type="CDD" id="cd04242">
    <property type="entry name" value="AAK_G5K_ProB"/>
    <property type="match status" value="1"/>
</dbReference>
<dbReference type="CDD" id="cd21157">
    <property type="entry name" value="PUA_G5K"/>
    <property type="match status" value="1"/>
</dbReference>
<dbReference type="FunFam" id="2.30.130.10:FF:000003">
    <property type="entry name" value="Glutamate 5-kinase"/>
    <property type="match status" value="1"/>
</dbReference>
<dbReference type="FunFam" id="3.40.1160.10:FF:000006">
    <property type="entry name" value="Glutamate 5-kinase"/>
    <property type="match status" value="1"/>
</dbReference>
<dbReference type="Gene3D" id="3.40.1160.10">
    <property type="entry name" value="Acetylglutamate kinase-like"/>
    <property type="match status" value="2"/>
</dbReference>
<dbReference type="Gene3D" id="2.30.130.10">
    <property type="entry name" value="PUA domain"/>
    <property type="match status" value="1"/>
</dbReference>
<dbReference type="HAMAP" id="MF_00456">
    <property type="entry name" value="ProB"/>
    <property type="match status" value="1"/>
</dbReference>
<dbReference type="InterPro" id="IPR036393">
    <property type="entry name" value="AceGlu_kinase-like_sf"/>
</dbReference>
<dbReference type="InterPro" id="IPR001048">
    <property type="entry name" value="Asp/Glu/Uridylate_kinase"/>
</dbReference>
<dbReference type="InterPro" id="IPR041739">
    <property type="entry name" value="G5K_ProB"/>
</dbReference>
<dbReference type="InterPro" id="IPR001057">
    <property type="entry name" value="Glu/AcGlu_kinase"/>
</dbReference>
<dbReference type="InterPro" id="IPR011529">
    <property type="entry name" value="Glu_5kinase"/>
</dbReference>
<dbReference type="InterPro" id="IPR005715">
    <property type="entry name" value="Glu_5kinase/COase_Synthase"/>
</dbReference>
<dbReference type="InterPro" id="IPR019797">
    <property type="entry name" value="Glutamate_5-kinase_CS"/>
</dbReference>
<dbReference type="InterPro" id="IPR002478">
    <property type="entry name" value="PUA"/>
</dbReference>
<dbReference type="InterPro" id="IPR015947">
    <property type="entry name" value="PUA-like_sf"/>
</dbReference>
<dbReference type="InterPro" id="IPR036974">
    <property type="entry name" value="PUA_sf"/>
</dbReference>
<dbReference type="NCBIfam" id="TIGR01027">
    <property type="entry name" value="proB"/>
    <property type="match status" value="1"/>
</dbReference>
<dbReference type="PANTHER" id="PTHR43654">
    <property type="entry name" value="GLUTAMATE 5-KINASE"/>
    <property type="match status" value="1"/>
</dbReference>
<dbReference type="PANTHER" id="PTHR43654:SF1">
    <property type="entry name" value="ISOPENTENYL PHOSPHATE KINASE"/>
    <property type="match status" value="1"/>
</dbReference>
<dbReference type="Pfam" id="PF00696">
    <property type="entry name" value="AA_kinase"/>
    <property type="match status" value="1"/>
</dbReference>
<dbReference type="Pfam" id="PF01472">
    <property type="entry name" value="PUA"/>
    <property type="match status" value="1"/>
</dbReference>
<dbReference type="PIRSF" id="PIRSF000729">
    <property type="entry name" value="GK"/>
    <property type="match status" value="1"/>
</dbReference>
<dbReference type="PRINTS" id="PR00474">
    <property type="entry name" value="GLU5KINASE"/>
</dbReference>
<dbReference type="SMART" id="SM00359">
    <property type="entry name" value="PUA"/>
    <property type="match status" value="1"/>
</dbReference>
<dbReference type="SUPFAM" id="SSF53633">
    <property type="entry name" value="Carbamate kinase-like"/>
    <property type="match status" value="1"/>
</dbReference>
<dbReference type="SUPFAM" id="SSF88697">
    <property type="entry name" value="PUA domain-like"/>
    <property type="match status" value="1"/>
</dbReference>
<dbReference type="PROSITE" id="PS00902">
    <property type="entry name" value="GLUTAMATE_5_KINASE"/>
    <property type="match status" value="1"/>
</dbReference>
<dbReference type="PROSITE" id="PS50890">
    <property type="entry name" value="PUA"/>
    <property type="match status" value="1"/>
</dbReference>